<evidence type="ECO:0000250" key="1"/>
<evidence type="ECO:0000255" key="2"/>
<evidence type="ECO:0000255" key="3">
    <source>
        <dbReference type="PROSITE-ProRule" id="PRU10102"/>
    </source>
</evidence>
<evidence type="ECO:0000305" key="4"/>
<evidence type="ECO:0000305" key="5">
    <source>
    </source>
</evidence>
<dbReference type="EC" id="3.5.2.6"/>
<dbReference type="EMBL" id="X63149">
    <property type="protein sequence ID" value="CAA44850.1"/>
    <property type="molecule type" value="Genomic_DNA"/>
</dbReference>
<dbReference type="PIR" id="B48899">
    <property type="entry name" value="B48899"/>
</dbReference>
<dbReference type="RefSeq" id="WP_020283255.1">
    <property type="nucleotide sequence ID" value="NZ_UHIX01000001.1"/>
</dbReference>
<dbReference type="SMR" id="P45460"/>
<dbReference type="STRING" id="1443113.LC20_03056"/>
<dbReference type="GO" id="GO:0030288">
    <property type="term" value="C:outer membrane-bounded periplasmic space"/>
    <property type="evidence" value="ECO:0007669"/>
    <property type="project" value="InterPro"/>
</dbReference>
<dbReference type="GO" id="GO:0008800">
    <property type="term" value="F:beta-lactamase activity"/>
    <property type="evidence" value="ECO:0007669"/>
    <property type="project" value="UniProtKB-EC"/>
</dbReference>
<dbReference type="GO" id="GO:0017001">
    <property type="term" value="P:antibiotic catabolic process"/>
    <property type="evidence" value="ECO:0007669"/>
    <property type="project" value="InterPro"/>
</dbReference>
<dbReference type="GO" id="GO:0046677">
    <property type="term" value="P:response to antibiotic"/>
    <property type="evidence" value="ECO:0007669"/>
    <property type="project" value="UniProtKB-KW"/>
</dbReference>
<dbReference type="Gene3D" id="3.40.710.10">
    <property type="entry name" value="DD-peptidase/beta-lactamase superfamily"/>
    <property type="match status" value="1"/>
</dbReference>
<dbReference type="InterPro" id="IPR050491">
    <property type="entry name" value="Bact_CellWall_Synth/Modif"/>
</dbReference>
<dbReference type="InterPro" id="IPR001466">
    <property type="entry name" value="Beta-lactam-related"/>
</dbReference>
<dbReference type="InterPro" id="IPR012338">
    <property type="entry name" value="Beta-lactam/transpept-like"/>
</dbReference>
<dbReference type="InterPro" id="IPR001586">
    <property type="entry name" value="Beta-lactam_class-C_AS"/>
</dbReference>
<dbReference type="NCBIfam" id="NF033085">
    <property type="entry name" value="bla_class_C"/>
    <property type="match status" value="1"/>
</dbReference>
<dbReference type="PANTHER" id="PTHR46825:SF8">
    <property type="entry name" value="BETA-LACTAMASE-RELATED"/>
    <property type="match status" value="1"/>
</dbReference>
<dbReference type="PANTHER" id="PTHR46825">
    <property type="entry name" value="D-ALANYL-D-ALANINE-CARBOXYPEPTIDASE/ENDOPEPTIDASE AMPH"/>
    <property type="match status" value="1"/>
</dbReference>
<dbReference type="Pfam" id="PF00144">
    <property type="entry name" value="Beta-lactamase"/>
    <property type="match status" value="1"/>
</dbReference>
<dbReference type="SUPFAM" id="SSF56601">
    <property type="entry name" value="beta-lactamase/transpeptidase-like"/>
    <property type="match status" value="1"/>
</dbReference>
<dbReference type="PROSITE" id="PS00336">
    <property type="entry name" value="BETA_LACTAMASE_C"/>
    <property type="match status" value="1"/>
</dbReference>
<accession>P45460</accession>
<organism>
    <name type="scientific">Yersinia enterocolitica</name>
    <dbReference type="NCBI Taxonomy" id="630"/>
    <lineage>
        <taxon>Bacteria</taxon>
        <taxon>Pseudomonadati</taxon>
        <taxon>Pseudomonadota</taxon>
        <taxon>Gammaproteobacteria</taxon>
        <taxon>Enterobacterales</taxon>
        <taxon>Yersiniaceae</taxon>
        <taxon>Yersinia</taxon>
    </lineage>
</organism>
<reference key="1">
    <citation type="journal article" date="1992" name="Antimicrob. Agents Chemother.">
        <title>Nucleotide sequence of the ampC-ampR region from the chromosome of Yersinia enterocolitica.</title>
        <authorList>
            <person name="Seoane A."/>
            <person name="Francia M.V."/>
            <person name="Garcia Lobo J.M."/>
        </authorList>
    </citation>
    <scope>NUCLEOTIDE SEQUENCE [GENOMIC DNA]</scope>
    <source>
        <strain>IP97 / Serotype O:5B</strain>
    </source>
</reference>
<reference key="2">
    <citation type="journal article" date="2020" name="Antimicrob. Agents Chemother.">
        <title>A Standard Numbering Scheme for Class C beta-Lactamases.</title>
        <authorList>
            <person name="Mack A.R."/>
            <person name="Barnes M.D."/>
            <person name="Taracila M.A."/>
            <person name="Hujer A.M."/>
            <person name="Hujer K.M."/>
            <person name="Cabot G."/>
            <person name="Feldgarden M."/>
            <person name="Haft D.H."/>
            <person name="Klimke W."/>
            <person name="van den Akker F."/>
            <person name="Vila A.J."/>
            <person name="Smania A."/>
            <person name="Haider S."/>
            <person name="Papp-Wallace K.M."/>
            <person name="Bradford P.A."/>
            <person name="Rossolini G.M."/>
            <person name="Docquier J.D."/>
            <person name="Frere J.M."/>
            <person name="Galleni M."/>
            <person name="Hanson N.D."/>
            <person name="Oliver A."/>
            <person name="Plesiat P."/>
            <person name="Poirel L."/>
            <person name="Nordmann P."/>
            <person name="Palzkill T.G."/>
            <person name="Jacoby G.A."/>
            <person name="Bush K."/>
            <person name="Bonomo R.A."/>
        </authorList>
    </citation>
    <scope>AMINO ACID NUMBERING SCHEME</scope>
</reference>
<comment type="function">
    <text>This protein is a serine beta-lactamase with a substrate specificity for cephalosporins.</text>
</comment>
<comment type="catalytic activity">
    <reaction evidence="3">
        <text>a beta-lactam + H2O = a substituted beta-amino acid</text>
        <dbReference type="Rhea" id="RHEA:20401"/>
        <dbReference type="ChEBI" id="CHEBI:15377"/>
        <dbReference type="ChEBI" id="CHEBI:35627"/>
        <dbReference type="ChEBI" id="CHEBI:140347"/>
        <dbReference type="EC" id="3.5.2.6"/>
    </reaction>
</comment>
<comment type="subcellular location">
    <subcellularLocation>
        <location evidence="1">Periplasm</location>
    </subcellularLocation>
</comment>
<comment type="miscellaneous">
    <text evidence="5">The class C beta-lactamase family has a specific amino-acid numbering system known as SANC, for structural alignment-based numbering of class C beta-lactamases, or else the simpler name structural position. A multiple sequence alignment was used to derive a consensus sequence and then the consensus was numbered taking into account insertions and deletions. This allows use of identical numbers, e.g. for active site residues, despite differences in protein length. UniProt always uses natural numbering of residues, hence there appear to be differences in numbering between this entry and some papers.</text>
</comment>
<comment type="similarity">
    <text evidence="4">Belongs to the class-C beta-lactamase family.</text>
</comment>
<gene>
    <name type="primary">ampC</name>
</gene>
<protein>
    <recommendedName>
        <fullName>Beta-lactamase</fullName>
        <ecNumber>3.5.2.6</ecNumber>
    </recommendedName>
    <alternativeName>
        <fullName>Cephalosporinase</fullName>
    </alternativeName>
</protein>
<name>AMPC_YEREN</name>
<feature type="signal peptide" evidence="2">
    <location>
        <begin position="1"/>
        <end position="24"/>
    </location>
</feature>
<feature type="chain" id="PRO_0000016966" description="Beta-lactamase">
    <location>
        <begin position="25"/>
        <end position="388"/>
    </location>
</feature>
<feature type="active site" description="Acyl-ester intermediate" evidence="3">
    <location>
        <position position="89"/>
    </location>
</feature>
<feature type="active site" description="Proton acceptor" evidence="1">
    <location>
        <position position="175"/>
    </location>
</feature>
<feature type="binding site" evidence="1">
    <location>
        <begin position="342"/>
        <end position="344"/>
    </location>
    <ligand>
        <name>substrate</name>
    </ligand>
</feature>
<keyword id="KW-0046">Antibiotic resistance</keyword>
<keyword id="KW-0378">Hydrolase</keyword>
<keyword id="KW-0574">Periplasm</keyword>
<keyword id="KW-0732">Signal</keyword>
<proteinExistence type="inferred from homology"/>
<sequence length="388" mass="43111">MMKKSIINTLIFTSIATFPLYTLAQTKLTELQVATIVNNTLTPLLEKQGIPGMAVAVFYDGKPQFFNYGMADIKAGRPVTENTLFELGSVSKTFTGVAGEYAMQTGIMNLNDPVTEYAPELTGSQWKDVKMLHLATYTAGGLPLQLPDSVTDQKSLWQYYQQWQPQWAPGVMRNYSNASIGLFGALAVKRSQLTFENYMKEYVFQPLKLDHTFITIPESMQSNYAWGYKDGQPVRVTLGMLGEEAYGVKSTSQDMVRFMQANMDPESLPAGNDKLKEAIIASQSRYFQAGDMFQGLGWEMYSWPINPQGVIADSGNDIALKPRKVEALVPAQPAVRASWVHKTGATNGFGAYIVFIPEEKVGIVMLANKNYPNPVRVQAAYDILQALR</sequence>